<reference key="1">
    <citation type="journal article" date="1993" name="Gene">
        <title>Genes encoding eleven subunits of photosystem I from the thermophilic cyanobacterium Synechococcus sp.</title>
        <authorList>
            <person name="Muehlenhoff U."/>
            <person name="Haehnel W."/>
            <person name="Witt H.T."/>
            <person name="Herrmann R.G."/>
        </authorList>
    </citation>
    <scope>NUCLEOTIDE SEQUENCE [GENOMIC DNA]</scope>
</reference>
<evidence type="ECO:0000255" key="1">
    <source>
        <dbReference type="HAMAP-Rule" id="MF_00828"/>
    </source>
</evidence>
<proteinExistence type="inferred from homology"/>
<gene>
    <name evidence="1" type="primary">psaM</name>
</gene>
<protein>
    <recommendedName>
        <fullName evidence="1">Photosystem I reaction center subunit XII</fullName>
    </recommendedName>
    <alternativeName>
        <fullName evidence="1">PSI-M</fullName>
    </alternativeName>
</protein>
<accession>P0A404</accession>
<accession>P25903</accession>
<keyword id="KW-0472">Membrane</keyword>
<keyword id="KW-0602">Photosynthesis</keyword>
<keyword id="KW-0603">Photosystem I</keyword>
<keyword id="KW-0793">Thylakoid</keyword>
<keyword id="KW-0812">Transmembrane</keyword>
<keyword id="KW-1133">Transmembrane helix</keyword>
<dbReference type="EMBL" id="X59760">
    <property type="protein sequence ID" value="CAA42429.1"/>
    <property type="molecule type" value="Genomic_DNA"/>
</dbReference>
<dbReference type="SMR" id="P0A404"/>
<dbReference type="GO" id="GO:0009522">
    <property type="term" value="C:photosystem I"/>
    <property type="evidence" value="ECO:0007669"/>
    <property type="project" value="UniProtKB-KW"/>
</dbReference>
<dbReference type="GO" id="GO:0031676">
    <property type="term" value="C:plasma membrane-derived thylakoid membrane"/>
    <property type="evidence" value="ECO:0007669"/>
    <property type="project" value="UniProtKB-SubCell"/>
</dbReference>
<dbReference type="GO" id="GO:0015979">
    <property type="term" value="P:photosynthesis"/>
    <property type="evidence" value="ECO:0007669"/>
    <property type="project" value="UniProtKB-UniRule"/>
</dbReference>
<dbReference type="HAMAP" id="MF_00828">
    <property type="entry name" value="PSI_PsaM"/>
    <property type="match status" value="1"/>
</dbReference>
<dbReference type="InterPro" id="IPR010010">
    <property type="entry name" value="PSI_PsaM"/>
</dbReference>
<dbReference type="InterPro" id="IPR037279">
    <property type="entry name" value="PSI_PsaM_sf"/>
</dbReference>
<dbReference type="NCBIfam" id="TIGR03053">
    <property type="entry name" value="PS_I_psaM"/>
    <property type="match status" value="1"/>
</dbReference>
<dbReference type="Pfam" id="PF07465">
    <property type="entry name" value="PsaM"/>
    <property type="match status" value="1"/>
</dbReference>
<dbReference type="SUPFAM" id="SSF81548">
    <property type="entry name" value="Subunit XII of photosystem I reaction centre, PsaM"/>
    <property type="match status" value="1"/>
</dbReference>
<organism>
    <name type="scientific">Synechococcus elongatus</name>
    <dbReference type="NCBI Taxonomy" id="32046"/>
    <lineage>
        <taxon>Bacteria</taxon>
        <taxon>Bacillati</taxon>
        <taxon>Cyanobacteriota</taxon>
        <taxon>Cyanophyceae</taxon>
        <taxon>Synechococcales</taxon>
        <taxon>Synechococcaceae</taxon>
        <taxon>Synechococcus</taxon>
    </lineage>
</organism>
<name>PSAM_SYNEL</name>
<sequence length="31" mass="3424">MALTDTQVYVALVIALLPAVLAFRLSTELYK</sequence>
<comment type="subcellular location">
    <subcellularLocation>
        <location evidence="1">Cellular thylakoid membrane</location>
        <topology evidence="1">Single-pass membrane protein</topology>
    </subcellularLocation>
</comment>
<comment type="similarity">
    <text evidence="1">Belongs to the PsaM family.</text>
</comment>
<feature type="chain" id="PRO_0000207770" description="Photosystem I reaction center subunit XII">
    <location>
        <begin position="1"/>
        <end position="31"/>
    </location>
</feature>
<feature type="transmembrane region" description="Helical" evidence="1">
    <location>
        <begin position="7"/>
        <end position="26"/>
    </location>
</feature>